<keyword id="KW-0963">Cytoplasm</keyword>
<keyword id="KW-0694">RNA-binding</keyword>
<comment type="function">
    <text evidence="1">Required for rescue of stalled ribosomes mediated by trans-translation. Binds to transfer-messenger RNA (tmRNA), required for stable association of tmRNA with ribosomes. tmRNA and SmpB together mimic tRNA shape, replacing the anticodon stem-loop with SmpB. tmRNA is encoded by the ssrA gene; the 2 termini fold to resemble tRNA(Ala) and it encodes a 'tag peptide', a short internal open reading frame. During trans-translation Ala-aminoacylated tmRNA acts like a tRNA, entering the A-site of stalled ribosomes, displacing the stalled mRNA. The ribosome then switches to translate the ORF on the tmRNA; the nascent peptide is terminated with the 'tag peptide' encoded by the tmRNA and targeted for degradation. The ribosome is freed to recommence translation, which seems to be the essential function of trans-translation.</text>
</comment>
<comment type="subcellular location">
    <subcellularLocation>
        <location evidence="1">Cytoplasm</location>
    </subcellularLocation>
    <text evidence="1">The tmRNA-SmpB complex associates with stalled 70S ribosomes.</text>
</comment>
<comment type="similarity">
    <text evidence="1">Belongs to the SmpB family.</text>
</comment>
<gene>
    <name evidence="1" type="primary">smpB</name>
    <name type="ordered locus">Cvib_1207</name>
</gene>
<proteinExistence type="inferred from homology"/>
<reference key="1">
    <citation type="submission" date="2007-03" db="EMBL/GenBank/DDBJ databases">
        <title>Complete sequence of Prosthecochloris vibrioformis DSM 265.</title>
        <authorList>
            <consortium name="US DOE Joint Genome Institute"/>
            <person name="Copeland A."/>
            <person name="Lucas S."/>
            <person name="Lapidus A."/>
            <person name="Barry K."/>
            <person name="Detter J.C."/>
            <person name="Glavina del Rio T."/>
            <person name="Hammon N."/>
            <person name="Israni S."/>
            <person name="Pitluck S."/>
            <person name="Schmutz J."/>
            <person name="Larimer F."/>
            <person name="Land M."/>
            <person name="Hauser L."/>
            <person name="Mikhailova N."/>
            <person name="Li T."/>
            <person name="Overmann J."/>
            <person name="Schuster S.C."/>
            <person name="Bryant D.A."/>
            <person name="Richardson P."/>
        </authorList>
    </citation>
    <scope>NUCLEOTIDE SEQUENCE [LARGE SCALE GENOMIC DNA]</scope>
    <source>
        <strain>DSM 265 / 1930</strain>
    </source>
</reference>
<organism>
    <name type="scientific">Chlorobium phaeovibrioides (strain DSM 265 / 1930)</name>
    <name type="common">Prosthecochloris vibrioformis (strain DSM 265)</name>
    <dbReference type="NCBI Taxonomy" id="290318"/>
    <lineage>
        <taxon>Bacteria</taxon>
        <taxon>Pseudomonadati</taxon>
        <taxon>Chlorobiota</taxon>
        <taxon>Chlorobiia</taxon>
        <taxon>Chlorobiales</taxon>
        <taxon>Chlorobiaceae</taxon>
        <taxon>Chlorobium/Pelodictyon group</taxon>
        <taxon>Chlorobium</taxon>
    </lineage>
</organism>
<protein>
    <recommendedName>
        <fullName evidence="1">SsrA-binding protein</fullName>
    </recommendedName>
    <alternativeName>
        <fullName evidence="1">Small protein B</fullName>
    </alternativeName>
</protein>
<evidence type="ECO:0000255" key="1">
    <source>
        <dbReference type="HAMAP-Rule" id="MF_00023"/>
    </source>
</evidence>
<dbReference type="EMBL" id="CP000607">
    <property type="protein sequence ID" value="ABP37219.1"/>
    <property type="molecule type" value="Genomic_DNA"/>
</dbReference>
<dbReference type="SMR" id="A4SFG0"/>
<dbReference type="STRING" id="290318.Cvib_1207"/>
<dbReference type="KEGG" id="pvi:Cvib_1207"/>
<dbReference type="eggNOG" id="COG0691">
    <property type="taxonomic scope" value="Bacteria"/>
</dbReference>
<dbReference type="HOGENOM" id="CLU_108953_0_1_10"/>
<dbReference type="OrthoDB" id="9805462at2"/>
<dbReference type="GO" id="GO:0005829">
    <property type="term" value="C:cytosol"/>
    <property type="evidence" value="ECO:0007669"/>
    <property type="project" value="TreeGrafter"/>
</dbReference>
<dbReference type="GO" id="GO:0003723">
    <property type="term" value="F:RNA binding"/>
    <property type="evidence" value="ECO:0007669"/>
    <property type="project" value="UniProtKB-UniRule"/>
</dbReference>
<dbReference type="GO" id="GO:0070929">
    <property type="term" value="P:trans-translation"/>
    <property type="evidence" value="ECO:0007669"/>
    <property type="project" value="UniProtKB-UniRule"/>
</dbReference>
<dbReference type="CDD" id="cd09294">
    <property type="entry name" value="SmpB"/>
    <property type="match status" value="1"/>
</dbReference>
<dbReference type="Gene3D" id="2.40.280.10">
    <property type="match status" value="1"/>
</dbReference>
<dbReference type="HAMAP" id="MF_00023">
    <property type="entry name" value="SmpB"/>
    <property type="match status" value="1"/>
</dbReference>
<dbReference type="InterPro" id="IPR023620">
    <property type="entry name" value="SmpB"/>
</dbReference>
<dbReference type="InterPro" id="IPR000037">
    <property type="entry name" value="SsrA-bd_prot"/>
</dbReference>
<dbReference type="InterPro" id="IPR020081">
    <property type="entry name" value="SsrA-bd_prot_CS"/>
</dbReference>
<dbReference type="NCBIfam" id="NF003843">
    <property type="entry name" value="PRK05422.1"/>
    <property type="match status" value="1"/>
</dbReference>
<dbReference type="NCBIfam" id="TIGR00086">
    <property type="entry name" value="smpB"/>
    <property type="match status" value="1"/>
</dbReference>
<dbReference type="PANTHER" id="PTHR30308:SF2">
    <property type="entry name" value="SSRA-BINDING PROTEIN"/>
    <property type="match status" value="1"/>
</dbReference>
<dbReference type="PANTHER" id="PTHR30308">
    <property type="entry name" value="TMRNA-BINDING COMPONENT OF TRANS-TRANSLATION TAGGING COMPLEX"/>
    <property type="match status" value="1"/>
</dbReference>
<dbReference type="Pfam" id="PF01668">
    <property type="entry name" value="SmpB"/>
    <property type="match status" value="1"/>
</dbReference>
<dbReference type="SUPFAM" id="SSF74982">
    <property type="entry name" value="Small protein B (SmpB)"/>
    <property type="match status" value="1"/>
</dbReference>
<dbReference type="PROSITE" id="PS01317">
    <property type="entry name" value="SSRP"/>
    <property type="match status" value="1"/>
</dbReference>
<name>SSRP_CHLPM</name>
<sequence>MAKKQQTKTYTQAIQNRKARFEFEILDTVVAGIELLGSEVKSVRLGKASLNESFAIIHHGEVWLENMQITPYEFNHLDSLEPKRSRKLLLHKAEIAKLQSQISEKGLALIPLKAFFNPKGVLKLELAVAKGKKLFDKRETIKNRDNERQLQQIKKQY</sequence>
<feature type="chain" id="PRO_1000074361" description="SsrA-binding protein">
    <location>
        <begin position="1"/>
        <end position="157"/>
    </location>
</feature>
<accession>A4SFG0</accession>